<reference key="1">
    <citation type="submission" date="1998-09" db="EMBL/GenBank/DDBJ databases">
        <authorList>
            <person name="Schobert C."/>
            <person name="Lucas W.J."/>
        </authorList>
    </citation>
    <scope>NUCLEOTIDE SEQUENCE [MRNA]</scope>
    <source>
        <tissue>Phloem</tissue>
    </source>
</reference>
<sequence length="131" mass="14208">MSWQTYVDDHLMCEIEGNHLTSAAIIGQDGSVWAQSSTFPQFKPEEITAIMNDFNEPGSLAPTGLYLSGTKYMVIQGEPGAVIRGKKGPGGVTVKKTNQALIIGIYDEPMTPGQCNMIVERLGDYLIDQGL</sequence>
<proteinExistence type="evidence at transcript level"/>
<dbReference type="EMBL" id="AF092547">
    <property type="protein sequence ID" value="AAC62482.1"/>
    <property type="molecule type" value="mRNA"/>
</dbReference>
<dbReference type="RefSeq" id="XP_002514199.1">
    <property type="nucleotide sequence ID" value="XM_002514153.2"/>
</dbReference>
<dbReference type="SMR" id="O82572"/>
<dbReference type="Allergome" id="1191">
    <property type="allergen name" value="Ric c 8"/>
</dbReference>
<dbReference type="GeneID" id="8265128"/>
<dbReference type="KEGG" id="rcu:8265128"/>
<dbReference type="eggNOG" id="KOG1755">
    <property type="taxonomic scope" value="Eukaryota"/>
</dbReference>
<dbReference type="OMA" id="HHAENVQ"/>
<dbReference type="OrthoDB" id="421374at2759"/>
<dbReference type="GO" id="GO:0005737">
    <property type="term" value="C:cytoplasm"/>
    <property type="evidence" value="ECO:0007669"/>
    <property type="project" value="UniProtKB-KW"/>
</dbReference>
<dbReference type="GO" id="GO:0005856">
    <property type="term" value="C:cytoskeleton"/>
    <property type="evidence" value="ECO:0007669"/>
    <property type="project" value="UniProtKB-SubCell"/>
</dbReference>
<dbReference type="GO" id="GO:0003779">
    <property type="term" value="F:actin binding"/>
    <property type="evidence" value="ECO:0007669"/>
    <property type="project" value="UniProtKB-KW"/>
</dbReference>
<dbReference type="CDD" id="cd00148">
    <property type="entry name" value="PROF"/>
    <property type="match status" value="1"/>
</dbReference>
<dbReference type="FunFam" id="3.30.450.30:FF:000001">
    <property type="entry name" value="Profilin"/>
    <property type="match status" value="1"/>
</dbReference>
<dbReference type="Gene3D" id="3.30.450.30">
    <property type="entry name" value="Dynein light chain 2a, cytoplasmic"/>
    <property type="match status" value="1"/>
</dbReference>
<dbReference type="InterPro" id="IPR048278">
    <property type="entry name" value="PFN"/>
</dbReference>
<dbReference type="InterPro" id="IPR005455">
    <property type="entry name" value="PFN_euk"/>
</dbReference>
<dbReference type="InterPro" id="IPR036140">
    <property type="entry name" value="PFN_sf"/>
</dbReference>
<dbReference type="InterPro" id="IPR027310">
    <property type="entry name" value="Profilin_CS"/>
</dbReference>
<dbReference type="PANTHER" id="PTHR11604">
    <property type="entry name" value="PROFILIN"/>
    <property type="match status" value="1"/>
</dbReference>
<dbReference type="PANTHER" id="PTHR11604:SF46">
    <property type="entry name" value="PROFILIN-1"/>
    <property type="match status" value="1"/>
</dbReference>
<dbReference type="Pfam" id="PF00235">
    <property type="entry name" value="Profilin"/>
    <property type="match status" value="1"/>
</dbReference>
<dbReference type="PRINTS" id="PR00392">
    <property type="entry name" value="PROFILIN"/>
</dbReference>
<dbReference type="PRINTS" id="PR01640">
    <property type="entry name" value="PROFILINPLNT"/>
</dbReference>
<dbReference type="SMART" id="SM00392">
    <property type="entry name" value="PROF"/>
    <property type="match status" value="1"/>
</dbReference>
<dbReference type="SUPFAM" id="SSF55770">
    <property type="entry name" value="Profilin (actin-binding protein)"/>
    <property type="match status" value="1"/>
</dbReference>
<dbReference type="PROSITE" id="PS00414">
    <property type="entry name" value="PROFILIN"/>
    <property type="match status" value="1"/>
</dbReference>
<protein>
    <recommendedName>
        <fullName>Profilin-1</fullName>
    </recommendedName>
</protein>
<name>PROF1_RICCO</name>
<comment type="function">
    <text evidence="1">Binds to actin and affects the structure of the cytoskeleton. At high concentrations, profilin prevents the polymerization of actin, whereas it enhances it at low concentrations. By binding to PIP2, it inhibits the formation of IP3 and DG (By similarity).</text>
</comment>
<comment type="subunit">
    <text>Occurs in many kinds of cells as a complex with monomeric actin in a 1:1 ratio.</text>
</comment>
<comment type="subcellular location">
    <subcellularLocation>
        <location evidence="1">Cytoplasm</location>
        <location evidence="1">Cytoskeleton</location>
    </subcellularLocation>
</comment>
<comment type="similarity">
    <text evidence="2">Belongs to the profilin family.</text>
</comment>
<organism>
    <name type="scientific">Ricinus communis</name>
    <name type="common">Castor bean</name>
    <dbReference type="NCBI Taxonomy" id="3988"/>
    <lineage>
        <taxon>Eukaryota</taxon>
        <taxon>Viridiplantae</taxon>
        <taxon>Streptophyta</taxon>
        <taxon>Embryophyta</taxon>
        <taxon>Tracheophyta</taxon>
        <taxon>Spermatophyta</taxon>
        <taxon>Magnoliopsida</taxon>
        <taxon>eudicotyledons</taxon>
        <taxon>Gunneridae</taxon>
        <taxon>Pentapetalae</taxon>
        <taxon>rosids</taxon>
        <taxon>fabids</taxon>
        <taxon>Malpighiales</taxon>
        <taxon>Euphorbiaceae</taxon>
        <taxon>Acalyphoideae</taxon>
        <taxon>Acalypheae</taxon>
        <taxon>Ricinus</taxon>
    </lineage>
</organism>
<gene>
    <name type="primary">PRO1</name>
</gene>
<feature type="initiator methionine" description="Removed" evidence="1">
    <location>
        <position position="1"/>
    </location>
</feature>
<feature type="chain" id="PRO_0000199671" description="Profilin-1">
    <location>
        <begin position="2"/>
        <end position="131"/>
    </location>
</feature>
<keyword id="KW-0009">Actin-binding</keyword>
<keyword id="KW-0963">Cytoplasm</keyword>
<keyword id="KW-0206">Cytoskeleton</keyword>
<accession>O82572</accession>
<evidence type="ECO:0000250" key="1"/>
<evidence type="ECO:0000305" key="2"/>